<evidence type="ECO:0000250" key="1">
    <source>
        <dbReference type="UniProtKB" id="Q02888"/>
    </source>
</evidence>
<evidence type="ECO:0000255" key="2"/>
<evidence type="ECO:0000305" key="3"/>
<dbReference type="EMBL" id="CR382125">
    <property type="protein sequence ID" value="CAH00133.1"/>
    <property type="molecule type" value="Genomic_DNA"/>
</dbReference>
<dbReference type="RefSeq" id="XP_455046.1">
    <property type="nucleotide sequence ID" value="XM_455046.1"/>
</dbReference>
<dbReference type="SMR" id="Q6CLZ3"/>
<dbReference type="FunCoup" id="Q6CLZ3">
    <property type="interactions" value="57"/>
</dbReference>
<dbReference type="PaxDb" id="284590-Q6CLZ3"/>
<dbReference type="KEGG" id="kla:KLLA0_E24311g"/>
<dbReference type="eggNOG" id="ENOG502S3U1">
    <property type="taxonomic scope" value="Eukaryota"/>
</dbReference>
<dbReference type="HOGENOM" id="CLU_127263_1_0_1"/>
<dbReference type="InParanoid" id="Q6CLZ3"/>
<dbReference type="OMA" id="HYVWWKL"/>
<dbReference type="Proteomes" id="UP000000598">
    <property type="component" value="Chromosome E"/>
</dbReference>
<dbReference type="GO" id="GO:0005743">
    <property type="term" value="C:mitochondrial inner membrane"/>
    <property type="evidence" value="ECO:0007669"/>
    <property type="project" value="UniProtKB-SubCell"/>
</dbReference>
<protein>
    <recommendedName>
        <fullName evidence="1">Inner membrane assembly complex subunit 17</fullName>
    </recommendedName>
</protein>
<proteinExistence type="inferred from homology"/>
<sequence>MFRPLVKRVVTRRFLAAANNSNAHIEIRTLEDLAKLQSLDNVDPKLISKLINDKTNELNIKNELQMLKQLQAEEQKTQETSLKKFVRPAWIFLLMGSIVYLSCHYVWWKLDYEEKELEYTHKVHQLESELAALNEAHNSSVSSDKNSKRSSRKWYKFW</sequence>
<reference key="1">
    <citation type="journal article" date="2004" name="Nature">
        <title>Genome evolution in yeasts.</title>
        <authorList>
            <person name="Dujon B."/>
            <person name="Sherman D."/>
            <person name="Fischer G."/>
            <person name="Durrens P."/>
            <person name="Casaregola S."/>
            <person name="Lafontaine I."/>
            <person name="de Montigny J."/>
            <person name="Marck C."/>
            <person name="Neuveglise C."/>
            <person name="Talla E."/>
            <person name="Goffard N."/>
            <person name="Frangeul L."/>
            <person name="Aigle M."/>
            <person name="Anthouard V."/>
            <person name="Babour A."/>
            <person name="Barbe V."/>
            <person name="Barnay S."/>
            <person name="Blanchin S."/>
            <person name="Beckerich J.-M."/>
            <person name="Beyne E."/>
            <person name="Bleykasten C."/>
            <person name="Boisrame A."/>
            <person name="Boyer J."/>
            <person name="Cattolico L."/>
            <person name="Confanioleri F."/>
            <person name="de Daruvar A."/>
            <person name="Despons L."/>
            <person name="Fabre E."/>
            <person name="Fairhead C."/>
            <person name="Ferry-Dumazet H."/>
            <person name="Groppi A."/>
            <person name="Hantraye F."/>
            <person name="Hennequin C."/>
            <person name="Jauniaux N."/>
            <person name="Joyet P."/>
            <person name="Kachouri R."/>
            <person name="Kerrest A."/>
            <person name="Koszul R."/>
            <person name="Lemaire M."/>
            <person name="Lesur I."/>
            <person name="Ma L."/>
            <person name="Muller H."/>
            <person name="Nicaud J.-M."/>
            <person name="Nikolski M."/>
            <person name="Oztas S."/>
            <person name="Ozier-Kalogeropoulos O."/>
            <person name="Pellenz S."/>
            <person name="Potier S."/>
            <person name="Richard G.-F."/>
            <person name="Straub M.-L."/>
            <person name="Suleau A."/>
            <person name="Swennen D."/>
            <person name="Tekaia F."/>
            <person name="Wesolowski-Louvel M."/>
            <person name="Westhof E."/>
            <person name="Wirth B."/>
            <person name="Zeniou-Meyer M."/>
            <person name="Zivanovic Y."/>
            <person name="Bolotin-Fukuhara M."/>
            <person name="Thierry A."/>
            <person name="Bouchier C."/>
            <person name="Caudron B."/>
            <person name="Scarpelli C."/>
            <person name="Gaillardin C."/>
            <person name="Weissenbach J."/>
            <person name="Wincker P."/>
            <person name="Souciet J.-L."/>
        </authorList>
    </citation>
    <scope>NUCLEOTIDE SEQUENCE [LARGE SCALE GENOMIC DNA]</scope>
    <source>
        <strain>ATCC 8585 / CBS 2359 / DSM 70799 / NBRC 1267 / NRRL Y-1140 / WM37</strain>
    </source>
</reference>
<feature type="transit peptide" description="Mitochondrion" evidence="2">
    <location>
        <begin position="1"/>
        <end position="15"/>
    </location>
</feature>
<feature type="chain" id="PRO_0000399879" description="Inner membrane assembly complex subunit 17" evidence="2">
    <location>
        <begin position="16"/>
        <end position="158"/>
    </location>
</feature>
<feature type="topological domain" description="Mitochondrial matrix" evidence="1">
    <location>
        <begin position="16"/>
        <end position="85"/>
    </location>
</feature>
<feature type="transmembrane region" description="Helical" evidence="2">
    <location>
        <begin position="86"/>
        <end position="108"/>
    </location>
</feature>
<feature type="topological domain" description="Mitochondrial intermembrane" evidence="1">
    <location>
        <begin position="109"/>
        <end position="158"/>
    </location>
</feature>
<feature type="coiled-coil region" evidence="2">
    <location>
        <begin position="110"/>
        <end position="140"/>
    </location>
</feature>
<keyword id="KW-0143">Chaperone</keyword>
<keyword id="KW-0175">Coiled coil</keyword>
<keyword id="KW-0472">Membrane</keyword>
<keyword id="KW-0496">Mitochondrion</keyword>
<keyword id="KW-0999">Mitochondrion inner membrane</keyword>
<keyword id="KW-1185">Reference proteome</keyword>
<keyword id="KW-0809">Transit peptide</keyword>
<keyword id="KW-0812">Transmembrane</keyword>
<keyword id="KW-1133">Transmembrane helix</keyword>
<organism>
    <name type="scientific">Kluyveromyces lactis (strain ATCC 8585 / CBS 2359 / DSM 70799 / NBRC 1267 / NRRL Y-1140 / WM37)</name>
    <name type="common">Yeast</name>
    <name type="synonym">Candida sphaerica</name>
    <dbReference type="NCBI Taxonomy" id="284590"/>
    <lineage>
        <taxon>Eukaryota</taxon>
        <taxon>Fungi</taxon>
        <taxon>Dikarya</taxon>
        <taxon>Ascomycota</taxon>
        <taxon>Saccharomycotina</taxon>
        <taxon>Saccharomycetes</taxon>
        <taxon>Saccharomycetales</taxon>
        <taxon>Saccharomycetaceae</taxon>
        <taxon>Kluyveromyces</taxon>
    </lineage>
</organism>
<comment type="function">
    <text evidence="1">Component of the INA complex (INAC) that promotes the biogenesis of mitochondrial F(1)F(0)-ATP synthase. INAC facilitates the assembly of the peripheral stalk and promotes the assembly of the catalytic F(1)-domain with the membrane-embedded F(0)-domain.</text>
</comment>
<comment type="subunit">
    <text evidence="1">Component of the inner membrane assembly (INA) complex, composed of INA17 and INA22. Interacts with a subset of F(1)F(0)-ATP synthase subunits of the F(1)-domain and the peripheral stalk.</text>
</comment>
<comment type="subcellular location">
    <subcellularLocation>
        <location evidence="1">Mitochondrion inner membrane</location>
        <topology evidence="2">Single-pass membrane protein</topology>
    </subcellularLocation>
</comment>
<comment type="similarity">
    <text evidence="3">Belongs to the INA17 family.</text>
</comment>
<gene>
    <name evidence="1" type="primary">INA17</name>
    <name type="ordered locus">KLLA0E24311g</name>
</gene>
<accession>Q6CLZ3</accession>
<name>INA17_KLULA</name>